<protein>
    <recommendedName>
        <fullName evidence="1">ATP-dependent Clp protease ATP-binding subunit ClpX</fullName>
    </recommendedName>
</protein>
<keyword id="KW-0067">ATP-binding</keyword>
<keyword id="KW-0143">Chaperone</keyword>
<keyword id="KW-0479">Metal-binding</keyword>
<keyword id="KW-0547">Nucleotide-binding</keyword>
<keyword id="KW-0862">Zinc</keyword>
<comment type="function">
    <text evidence="1">ATP-dependent specificity component of the Clp protease. It directs the protease to specific substrates. Can perform chaperone functions in the absence of ClpP.</text>
</comment>
<comment type="subunit">
    <text evidence="1">Component of the ClpX-ClpP complex. Forms a hexameric ring that, in the presence of ATP, binds to fourteen ClpP subunits assembled into a disk-like structure with a central cavity, resembling the structure of eukaryotic proteasomes.</text>
</comment>
<comment type="similarity">
    <text evidence="1">Belongs to the ClpX chaperone family.</text>
</comment>
<dbReference type="EMBL" id="AP011115">
    <property type="protein sequence ID" value="BAH49333.1"/>
    <property type="molecule type" value="Genomic_DNA"/>
</dbReference>
<dbReference type="RefSeq" id="WP_005248181.1">
    <property type="nucleotide sequence ID" value="NC_012522.1"/>
</dbReference>
<dbReference type="SMR" id="C1AVQ3"/>
<dbReference type="STRING" id="632772.ROP_10860"/>
<dbReference type="GeneID" id="69893034"/>
<dbReference type="KEGG" id="rop:ROP_10860"/>
<dbReference type="PATRIC" id="fig|632772.20.peg.1154"/>
<dbReference type="HOGENOM" id="CLU_014218_8_2_11"/>
<dbReference type="OrthoDB" id="9804062at2"/>
<dbReference type="Proteomes" id="UP000002212">
    <property type="component" value="Chromosome"/>
</dbReference>
<dbReference type="GO" id="GO:0009376">
    <property type="term" value="C:HslUV protease complex"/>
    <property type="evidence" value="ECO:0007669"/>
    <property type="project" value="TreeGrafter"/>
</dbReference>
<dbReference type="GO" id="GO:0005524">
    <property type="term" value="F:ATP binding"/>
    <property type="evidence" value="ECO:0007669"/>
    <property type="project" value="UniProtKB-UniRule"/>
</dbReference>
<dbReference type="GO" id="GO:0016887">
    <property type="term" value="F:ATP hydrolysis activity"/>
    <property type="evidence" value="ECO:0007669"/>
    <property type="project" value="InterPro"/>
</dbReference>
<dbReference type="GO" id="GO:0140662">
    <property type="term" value="F:ATP-dependent protein folding chaperone"/>
    <property type="evidence" value="ECO:0007669"/>
    <property type="project" value="InterPro"/>
</dbReference>
<dbReference type="GO" id="GO:0046983">
    <property type="term" value="F:protein dimerization activity"/>
    <property type="evidence" value="ECO:0007669"/>
    <property type="project" value="InterPro"/>
</dbReference>
<dbReference type="GO" id="GO:0051082">
    <property type="term" value="F:unfolded protein binding"/>
    <property type="evidence" value="ECO:0007669"/>
    <property type="project" value="UniProtKB-UniRule"/>
</dbReference>
<dbReference type="GO" id="GO:0008270">
    <property type="term" value="F:zinc ion binding"/>
    <property type="evidence" value="ECO:0007669"/>
    <property type="project" value="InterPro"/>
</dbReference>
<dbReference type="GO" id="GO:0051301">
    <property type="term" value="P:cell division"/>
    <property type="evidence" value="ECO:0007669"/>
    <property type="project" value="TreeGrafter"/>
</dbReference>
<dbReference type="GO" id="GO:0051603">
    <property type="term" value="P:proteolysis involved in protein catabolic process"/>
    <property type="evidence" value="ECO:0007669"/>
    <property type="project" value="TreeGrafter"/>
</dbReference>
<dbReference type="CDD" id="cd19497">
    <property type="entry name" value="RecA-like_ClpX"/>
    <property type="match status" value="1"/>
</dbReference>
<dbReference type="FunFam" id="1.10.8.60:FF:000002">
    <property type="entry name" value="ATP-dependent Clp protease ATP-binding subunit ClpX"/>
    <property type="match status" value="1"/>
</dbReference>
<dbReference type="FunFam" id="3.40.50.300:FF:000005">
    <property type="entry name" value="ATP-dependent Clp protease ATP-binding subunit ClpX"/>
    <property type="match status" value="1"/>
</dbReference>
<dbReference type="Gene3D" id="1.10.8.60">
    <property type="match status" value="1"/>
</dbReference>
<dbReference type="Gene3D" id="6.20.220.10">
    <property type="entry name" value="ClpX chaperone, C4-type zinc finger domain"/>
    <property type="match status" value="1"/>
</dbReference>
<dbReference type="Gene3D" id="3.40.50.300">
    <property type="entry name" value="P-loop containing nucleotide triphosphate hydrolases"/>
    <property type="match status" value="1"/>
</dbReference>
<dbReference type="HAMAP" id="MF_00175">
    <property type="entry name" value="ClpX"/>
    <property type="match status" value="1"/>
</dbReference>
<dbReference type="InterPro" id="IPR003593">
    <property type="entry name" value="AAA+_ATPase"/>
</dbReference>
<dbReference type="InterPro" id="IPR050052">
    <property type="entry name" value="ATP-dep_Clp_protease_ClpX"/>
</dbReference>
<dbReference type="InterPro" id="IPR003959">
    <property type="entry name" value="ATPase_AAA_core"/>
</dbReference>
<dbReference type="InterPro" id="IPR019489">
    <property type="entry name" value="Clp_ATPase_C"/>
</dbReference>
<dbReference type="InterPro" id="IPR004487">
    <property type="entry name" value="Clp_protease_ATP-bd_su_ClpX"/>
</dbReference>
<dbReference type="InterPro" id="IPR046425">
    <property type="entry name" value="ClpX_bact"/>
</dbReference>
<dbReference type="InterPro" id="IPR027417">
    <property type="entry name" value="P-loop_NTPase"/>
</dbReference>
<dbReference type="InterPro" id="IPR010603">
    <property type="entry name" value="Znf_CppX_C4"/>
</dbReference>
<dbReference type="InterPro" id="IPR038366">
    <property type="entry name" value="Znf_CppX_C4_sf"/>
</dbReference>
<dbReference type="NCBIfam" id="TIGR00382">
    <property type="entry name" value="clpX"/>
    <property type="match status" value="1"/>
</dbReference>
<dbReference type="NCBIfam" id="NF003745">
    <property type="entry name" value="PRK05342.1"/>
    <property type="match status" value="1"/>
</dbReference>
<dbReference type="PANTHER" id="PTHR48102:SF7">
    <property type="entry name" value="ATP-DEPENDENT CLP PROTEASE ATP-BINDING SUBUNIT CLPX-LIKE, MITOCHONDRIAL"/>
    <property type="match status" value="1"/>
</dbReference>
<dbReference type="PANTHER" id="PTHR48102">
    <property type="entry name" value="ATP-DEPENDENT CLP PROTEASE ATP-BINDING SUBUNIT CLPX-LIKE, MITOCHONDRIAL-RELATED"/>
    <property type="match status" value="1"/>
</dbReference>
<dbReference type="Pfam" id="PF07724">
    <property type="entry name" value="AAA_2"/>
    <property type="match status" value="1"/>
</dbReference>
<dbReference type="Pfam" id="PF10431">
    <property type="entry name" value="ClpB_D2-small"/>
    <property type="match status" value="1"/>
</dbReference>
<dbReference type="Pfam" id="PF06689">
    <property type="entry name" value="zf-C4_ClpX"/>
    <property type="match status" value="1"/>
</dbReference>
<dbReference type="SMART" id="SM00382">
    <property type="entry name" value="AAA"/>
    <property type="match status" value="1"/>
</dbReference>
<dbReference type="SMART" id="SM01086">
    <property type="entry name" value="ClpB_D2-small"/>
    <property type="match status" value="1"/>
</dbReference>
<dbReference type="SMART" id="SM00994">
    <property type="entry name" value="zf-C4_ClpX"/>
    <property type="match status" value="1"/>
</dbReference>
<dbReference type="SUPFAM" id="SSF57716">
    <property type="entry name" value="Glucocorticoid receptor-like (DNA-binding domain)"/>
    <property type="match status" value="1"/>
</dbReference>
<dbReference type="SUPFAM" id="SSF52540">
    <property type="entry name" value="P-loop containing nucleoside triphosphate hydrolases"/>
    <property type="match status" value="1"/>
</dbReference>
<dbReference type="PROSITE" id="PS51902">
    <property type="entry name" value="CLPX_ZB"/>
    <property type="match status" value="1"/>
</dbReference>
<organism>
    <name type="scientific">Rhodococcus opacus (strain B4)</name>
    <dbReference type="NCBI Taxonomy" id="632772"/>
    <lineage>
        <taxon>Bacteria</taxon>
        <taxon>Bacillati</taxon>
        <taxon>Actinomycetota</taxon>
        <taxon>Actinomycetes</taxon>
        <taxon>Mycobacteriales</taxon>
        <taxon>Nocardiaceae</taxon>
        <taxon>Rhodococcus</taxon>
    </lineage>
</organism>
<evidence type="ECO:0000255" key="1">
    <source>
        <dbReference type="HAMAP-Rule" id="MF_00175"/>
    </source>
</evidence>
<evidence type="ECO:0000255" key="2">
    <source>
        <dbReference type="PROSITE-ProRule" id="PRU01250"/>
    </source>
</evidence>
<gene>
    <name evidence="1" type="primary">clpX</name>
    <name type="ordered locus">ROP_10860</name>
</gene>
<sequence>MARIGDGGDLLKCSFCGKSQKQVKKLIAGPGVYICDECIDLCNEIIEEELAESSEVKLDELPKPAEIRDFLENYVIGQDAAKRTLAVAVYNHYKRIQAGDKGRDARGETVELAKSNILMLGPTGCGKTYLAQTLAKMLNVPFAIADATALTEAGYVGEDVENILLKLIQAADYDVKRAETGIIYIDEVDKIARKSENPSITRDVSGEGVQQALLKILEGTQASVPPQGGRKHPHQEFIQIDTTNVLFIVAGAFAGLERIVSDRVGKRGIGFGAEVRSKAEIDTQDHFAEVMPEDLIKFGLIPEFIGRLPVVASVTNLDKESLVQILSEPKNALVKQYNRLFDMDGVELEFTTDALEAIADQAILRGTGARGLRAIMEEVLLPVMYDIPSRDDVEKVVVSAETVNDNVLPTIVPRKPERGERRDKSA</sequence>
<accession>C1AVQ3</accession>
<proteinExistence type="inferred from homology"/>
<reference key="1">
    <citation type="submission" date="2009-03" db="EMBL/GenBank/DDBJ databases">
        <title>Comparison of the complete genome sequences of Rhodococcus erythropolis PR4 and Rhodococcus opacus B4.</title>
        <authorList>
            <person name="Takarada H."/>
            <person name="Sekine M."/>
            <person name="Hosoyama A."/>
            <person name="Yamada R."/>
            <person name="Fujisawa T."/>
            <person name="Omata S."/>
            <person name="Shimizu A."/>
            <person name="Tsukatani N."/>
            <person name="Tanikawa S."/>
            <person name="Fujita N."/>
            <person name="Harayama S."/>
        </authorList>
    </citation>
    <scope>NUCLEOTIDE SEQUENCE [LARGE SCALE GENOMIC DNA]</scope>
    <source>
        <strain>B4</strain>
    </source>
</reference>
<name>CLPX_RHOOB</name>
<feature type="chain" id="PRO_1000123846" description="ATP-dependent Clp protease ATP-binding subunit ClpX">
    <location>
        <begin position="1"/>
        <end position="426"/>
    </location>
</feature>
<feature type="domain" description="ClpX-type ZB" evidence="2">
    <location>
        <begin position="1"/>
        <end position="54"/>
    </location>
</feature>
<feature type="binding site" evidence="2">
    <location>
        <position position="13"/>
    </location>
    <ligand>
        <name>Zn(2+)</name>
        <dbReference type="ChEBI" id="CHEBI:29105"/>
    </ligand>
</feature>
<feature type="binding site" evidence="2">
    <location>
        <position position="16"/>
    </location>
    <ligand>
        <name>Zn(2+)</name>
        <dbReference type="ChEBI" id="CHEBI:29105"/>
    </ligand>
</feature>
<feature type="binding site" evidence="2">
    <location>
        <position position="35"/>
    </location>
    <ligand>
        <name>Zn(2+)</name>
        <dbReference type="ChEBI" id="CHEBI:29105"/>
    </ligand>
</feature>
<feature type="binding site" evidence="2">
    <location>
        <position position="38"/>
    </location>
    <ligand>
        <name>Zn(2+)</name>
        <dbReference type="ChEBI" id="CHEBI:29105"/>
    </ligand>
</feature>
<feature type="binding site" evidence="1">
    <location>
        <begin position="122"/>
        <end position="129"/>
    </location>
    <ligand>
        <name>ATP</name>
        <dbReference type="ChEBI" id="CHEBI:30616"/>
    </ligand>
</feature>